<proteinExistence type="inferred from homology"/>
<gene>
    <name type="ordered locus">Atu4467</name>
    <name type="ORF">AGR_L_805</name>
</gene>
<feature type="chain" id="PRO_0000256709" description="UPF0391 membrane protein Atu4467">
    <location>
        <begin position="1"/>
        <end position="57"/>
    </location>
</feature>
<feature type="transmembrane region" description="Helical" evidence="1">
    <location>
        <begin position="4"/>
        <end position="24"/>
    </location>
</feature>
<feature type="transmembrane region" description="Helical" evidence="1">
    <location>
        <begin position="33"/>
        <end position="53"/>
    </location>
</feature>
<dbReference type="EMBL" id="AE007870">
    <property type="protein sequence ID" value="AAK88975.2"/>
    <property type="molecule type" value="Genomic_DNA"/>
</dbReference>
<dbReference type="PIR" id="AG3105">
    <property type="entry name" value="AG3105"/>
</dbReference>
<dbReference type="PIR" id="E98181">
    <property type="entry name" value="E98181"/>
</dbReference>
<dbReference type="RefSeq" id="NP_356190.2">
    <property type="nucleotide sequence ID" value="NC_003063.2"/>
</dbReference>
<dbReference type="RefSeq" id="WP_010973875.1">
    <property type="nucleotide sequence ID" value="NC_003063.2"/>
</dbReference>
<dbReference type="STRING" id="176299.Atu4467"/>
<dbReference type="EnsemblBacteria" id="AAK88975">
    <property type="protein sequence ID" value="AAK88975"/>
    <property type="gene ID" value="Atu4467"/>
</dbReference>
<dbReference type="GeneID" id="1136341"/>
<dbReference type="KEGG" id="atu:Atu4467"/>
<dbReference type="PATRIC" id="fig|176299.10.peg.4274"/>
<dbReference type="eggNOG" id="COG5487">
    <property type="taxonomic scope" value="Bacteria"/>
</dbReference>
<dbReference type="HOGENOM" id="CLU_187346_1_1_5"/>
<dbReference type="BioCyc" id="AGRO:ATU4467-MONOMER"/>
<dbReference type="Proteomes" id="UP000000813">
    <property type="component" value="Chromosome linear"/>
</dbReference>
<dbReference type="GO" id="GO:0005886">
    <property type="term" value="C:plasma membrane"/>
    <property type="evidence" value="ECO:0007669"/>
    <property type="project" value="UniProtKB-SubCell"/>
</dbReference>
<dbReference type="HAMAP" id="MF_01361">
    <property type="entry name" value="UPF0391"/>
    <property type="match status" value="1"/>
</dbReference>
<dbReference type="InterPro" id="IPR009760">
    <property type="entry name" value="DUF1328"/>
</dbReference>
<dbReference type="NCBIfam" id="NF010226">
    <property type="entry name" value="PRK13682.1-1"/>
    <property type="match status" value="1"/>
</dbReference>
<dbReference type="NCBIfam" id="NF010234">
    <property type="entry name" value="PRK13682.2-5"/>
    <property type="match status" value="1"/>
</dbReference>
<dbReference type="Pfam" id="PF07043">
    <property type="entry name" value="DUF1328"/>
    <property type="match status" value="1"/>
</dbReference>
<dbReference type="PIRSF" id="PIRSF036466">
    <property type="entry name" value="UCP036466"/>
    <property type="match status" value="1"/>
</dbReference>
<comment type="subcellular location">
    <subcellularLocation>
        <location evidence="1">Cell membrane</location>
        <topology evidence="1">Multi-pass membrane protein</topology>
    </subcellularLocation>
</comment>
<comment type="similarity">
    <text evidence="1">Belongs to the UPF0391 family.</text>
</comment>
<name>Y4467_AGRFC</name>
<protein>
    <recommendedName>
        <fullName evidence="1">UPF0391 membrane protein Atu4467</fullName>
    </recommendedName>
</protein>
<organism>
    <name type="scientific">Agrobacterium fabrum (strain C58 / ATCC 33970)</name>
    <name type="common">Agrobacterium tumefaciens (strain C58)</name>
    <dbReference type="NCBI Taxonomy" id="176299"/>
    <lineage>
        <taxon>Bacteria</taxon>
        <taxon>Pseudomonadati</taxon>
        <taxon>Pseudomonadota</taxon>
        <taxon>Alphaproteobacteria</taxon>
        <taxon>Hyphomicrobiales</taxon>
        <taxon>Rhizobiaceae</taxon>
        <taxon>Rhizobium/Agrobacterium group</taxon>
        <taxon>Agrobacterium</taxon>
        <taxon>Agrobacterium tumefaciens complex</taxon>
    </lineage>
</organism>
<sequence>MLKWALIFFVISLIAGVFGFTGISAAAAGVARILFFIAVVIFLVFLVLALMAGSAIV</sequence>
<reference key="1">
    <citation type="journal article" date="2001" name="Science">
        <title>The genome of the natural genetic engineer Agrobacterium tumefaciens C58.</title>
        <authorList>
            <person name="Wood D.W."/>
            <person name="Setubal J.C."/>
            <person name="Kaul R."/>
            <person name="Monks D.E."/>
            <person name="Kitajima J.P."/>
            <person name="Okura V.K."/>
            <person name="Zhou Y."/>
            <person name="Chen L."/>
            <person name="Wood G.E."/>
            <person name="Almeida N.F. Jr."/>
            <person name="Woo L."/>
            <person name="Chen Y."/>
            <person name="Paulsen I.T."/>
            <person name="Eisen J.A."/>
            <person name="Karp P.D."/>
            <person name="Bovee D. Sr."/>
            <person name="Chapman P."/>
            <person name="Clendenning J."/>
            <person name="Deatherage G."/>
            <person name="Gillet W."/>
            <person name="Grant C."/>
            <person name="Kutyavin T."/>
            <person name="Levy R."/>
            <person name="Li M.-J."/>
            <person name="McClelland E."/>
            <person name="Palmieri A."/>
            <person name="Raymond C."/>
            <person name="Rouse G."/>
            <person name="Saenphimmachak C."/>
            <person name="Wu Z."/>
            <person name="Romero P."/>
            <person name="Gordon D."/>
            <person name="Zhang S."/>
            <person name="Yoo H."/>
            <person name="Tao Y."/>
            <person name="Biddle P."/>
            <person name="Jung M."/>
            <person name="Krespan W."/>
            <person name="Perry M."/>
            <person name="Gordon-Kamm B."/>
            <person name="Liao L."/>
            <person name="Kim S."/>
            <person name="Hendrick C."/>
            <person name="Zhao Z.-Y."/>
            <person name="Dolan M."/>
            <person name="Chumley F."/>
            <person name="Tingey S.V."/>
            <person name="Tomb J.-F."/>
            <person name="Gordon M.P."/>
            <person name="Olson M.V."/>
            <person name="Nester E.W."/>
        </authorList>
    </citation>
    <scope>NUCLEOTIDE SEQUENCE [LARGE SCALE GENOMIC DNA]</scope>
    <source>
        <strain>C58 / ATCC 33970</strain>
    </source>
</reference>
<reference key="2">
    <citation type="journal article" date="2001" name="Science">
        <title>Genome sequence of the plant pathogen and biotechnology agent Agrobacterium tumefaciens C58.</title>
        <authorList>
            <person name="Goodner B."/>
            <person name="Hinkle G."/>
            <person name="Gattung S."/>
            <person name="Miller N."/>
            <person name="Blanchard M."/>
            <person name="Qurollo B."/>
            <person name="Goldman B.S."/>
            <person name="Cao Y."/>
            <person name="Askenazi M."/>
            <person name="Halling C."/>
            <person name="Mullin L."/>
            <person name="Houmiel K."/>
            <person name="Gordon J."/>
            <person name="Vaudin M."/>
            <person name="Iartchouk O."/>
            <person name="Epp A."/>
            <person name="Liu F."/>
            <person name="Wollam C."/>
            <person name="Allinger M."/>
            <person name="Doughty D."/>
            <person name="Scott C."/>
            <person name="Lappas C."/>
            <person name="Markelz B."/>
            <person name="Flanagan C."/>
            <person name="Crowell C."/>
            <person name="Gurson J."/>
            <person name="Lomo C."/>
            <person name="Sear C."/>
            <person name="Strub G."/>
            <person name="Cielo C."/>
            <person name="Slater S."/>
        </authorList>
    </citation>
    <scope>NUCLEOTIDE SEQUENCE [LARGE SCALE GENOMIC DNA]</scope>
    <source>
        <strain>C58 / ATCC 33970</strain>
    </source>
</reference>
<evidence type="ECO:0000255" key="1">
    <source>
        <dbReference type="HAMAP-Rule" id="MF_01361"/>
    </source>
</evidence>
<accession>Q8U7I2</accession>
<accession>Q7CV12</accession>
<keyword id="KW-1003">Cell membrane</keyword>
<keyword id="KW-0472">Membrane</keyword>
<keyword id="KW-1185">Reference proteome</keyword>
<keyword id="KW-0812">Transmembrane</keyword>
<keyword id="KW-1133">Transmembrane helix</keyword>